<keyword id="KW-0997">Cell inner membrane</keyword>
<keyword id="KW-1003">Cell membrane</keyword>
<keyword id="KW-0285">Flavoprotein</keyword>
<keyword id="KW-0288">FMN</keyword>
<keyword id="KW-0406">Ion transport</keyword>
<keyword id="KW-0472">Membrane</keyword>
<keyword id="KW-0520">NAD</keyword>
<keyword id="KW-0597">Phosphoprotein</keyword>
<keyword id="KW-1185">Reference proteome</keyword>
<keyword id="KW-0915">Sodium</keyword>
<keyword id="KW-0739">Sodium transport</keyword>
<keyword id="KW-1278">Translocase</keyword>
<keyword id="KW-0812">Transmembrane</keyword>
<keyword id="KW-1133">Transmembrane helix</keyword>
<keyword id="KW-0813">Transport</keyword>
<keyword id="KW-0830">Ubiquinone</keyword>
<feature type="chain" id="PRO_0000214228" description="Na(+)-translocating NADH-quinone reductase subunit C">
    <location>
        <begin position="1"/>
        <end position="266"/>
    </location>
</feature>
<feature type="transmembrane region" description="Helical" evidence="1">
    <location>
        <begin position="16"/>
        <end position="36"/>
    </location>
</feature>
<feature type="modified residue" description="FMN phosphoryl threonine" evidence="1">
    <location>
        <position position="232"/>
    </location>
</feature>
<proteinExistence type="inferred from homology"/>
<accession>Q8ZBZ2</accession>
<accession>Q0WC48</accession>
<dbReference type="EC" id="7.2.1.1" evidence="1"/>
<dbReference type="EMBL" id="AL590842">
    <property type="protein sequence ID" value="CAL21832.1"/>
    <property type="molecule type" value="Genomic_DNA"/>
</dbReference>
<dbReference type="EMBL" id="AE009952">
    <property type="protein sequence ID" value="AAM84534.1"/>
    <property type="status" value="ALT_INIT"/>
    <property type="molecule type" value="Genomic_DNA"/>
</dbReference>
<dbReference type="EMBL" id="AE017042">
    <property type="protein sequence ID" value="AAS60961.1"/>
    <property type="status" value="ALT_INIT"/>
    <property type="molecule type" value="Genomic_DNA"/>
</dbReference>
<dbReference type="PIR" id="AE0393">
    <property type="entry name" value="AE0393"/>
</dbReference>
<dbReference type="RefSeq" id="WP_002208715.1">
    <property type="nucleotide sequence ID" value="NZ_WUCM01000034.1"/>
</dbReference>
<dbReference type="RefSeq" id="YP_002348140.1">
    <property type="nucleotide sequence ID" value="NC_003143.1"/>
</dbReference>
<dbReference type="SMR" id="Q8ZBZ2"/>
<dbReference type="STRING" id="214092.YPO3238"/>
<dbReference type="PaxDb" id="214092-YPO3238"/>
<dbReference type="DNASU" id="1145900"/>
<dbReference type="EnsemblBacteria" id="AAS60961">
    <property type="protein sequence ID" value="AAS60961"/>
    <property type="gene ID" value="YP_0695"/>
</dbReference>
<dbReference type="KEGG" id="ype:YPO3238"/>
<dbReference type="KEGG" id="ypk:y0953"/>
<dbReference type="KEGG" id="ypm:YP_0695"/>
<dbReference type="PATRIC" id="fig|1028802.3.peg.247"/>
<dbReference type="eggNOG" id="COG2869">
    <property type="taxonomic scope" value="Bacteria"/>
</dbReference>
<dbReference type="HOGENOM" id="CLU_077882_0_1_6"/>
<dbReference type="OMA" id="EVDNPRW"/>
<dbReference type="OrthoDB" id="9786835at2"/>
<dbReference type="Proteomes" id="UP000000815">
    <property type="component" value="Chromosome"/>
</dbReference>
<dbReference type="Proteomes" id="UP000001019">
    <property type="component" value="Chromosome"/>
</dbReference>
<dbReference type="Proteomes" id="UP000002490">
    <property type="component" value="Chromosome"/>
</dbReference>
<dbReference type="GO" id="GO:0005886">
    <property type="term" value="C:plasma membrane"/>
    <property type="evidence" value="ECO:0007669"/>
    <property type="project" value="UniProtKB-SubCell"/>
</dbReference>
<dbReference type="GO" id="GO:0010181">
    <property type="term" value="F:FMN binding"/>
    <property type="evidence" value="ECO:0007669"/>
    <property type="project" value="UniProtKB-UniRule"/>
</dbReference>
<dbReference type="GO" id="GO:0016655">
    <property type="term" value="F:oxidoreductase activity, acting on NAD(P)H, quinone or similar compound as acceptor"/>
    <property type="evidence" value="ECO:0007669"/>
    <property type="project" value="UniProtKB-UniRule"/>
</dbReference>
<dbReference type="GO" id="GO:0006814">
    <property type="term" value="P:sodium ion transport"/>
    <property type="evidence" value="ECO:0007669"/>
    <property type="project" value="UniProtKB-UniRule"/>
</dbReference>
<dbReference type="HAMAP" id="MF_00427">
    <property type="entry name" value="NqrC"/>
    <property type="match status" value="1"/>
</dbReference>
<dbReference type="InterPro" id="IPR007329">
    <property type="entry name" value="FMN-bd"/>
</dbReference>
<dbReference type="InterPro" id="IPR010204">
    <property type="entry name" value="NqrC"/>
</dbReference>
<dbReference type="NCBIfam" id="TIGR01938">
    <property type="entry name" value="nqrC"/>
    <property type="match status" value="1"/>
</dbReference>
<dbReference type="NCBIfam" id="NF003746">
    <property type="entry name" value="PRK05346.1-1"/>
    <property type="match status" value="1"/>
</dbReference>
<dbReference type="NCBIfam" id="NF003749">
    <property type="entry name" value="PRK05346.1-5"/>
    <property type="match status" value="1"/>
</dbReference>
<dbReference type="PANTHER" id="PTHR37838">
    <property type="entry name" value="NA(+)-TRANSLOCATING NADH-QUINONE REDUCTASE SUBUNIT C"/>
    <property type="match status" value="1"/>
</dbReference>
<dbReference type="PANTHER" id="PTHR37838:SF1">
    <property type="entry name" value="NA(+)-TRANSLOCATING NADH-QUINONE REDUCTASE SUBUNIT C"/>
    <property type="match status" value="1"/>
</dbReference>
<dbReference type="Pfam" id="PF04205">
    <property type="entry name" value="FMN_bind"/>
    <property type="match status" value="1"/>
</dbReference>
<dbReference type="PIRSF" id="PIRSF009437">
    <property type="entry name" value="NQR-1_subunit_C"/>
    <property type="match status" value="1"/>
</dbReference>
<dbReference type="SMART" id="SM00900">
    <property type="entry name" value="FMN_bind"/>
    <property type="match status" value="1"/>
</dbReference>
<evidence type="ECO:0000255" key="1">
    <source>
        <dbReference type="HAMAP-Rule" id="MF_00427"/>
    </source>
</evidence>
<evidence type="ECO:0000305" key="2"/>
<gene>
    <name evidence="1" type="primary">nqrC</name>
    <name type="ordered locus">YPO3238</name>
    <name type="ordered locus">y0953</name>
    <name type="ordered locus">YP_0695</name>
</gene>
<comment type="function">
    <text evidence="1">NQR complex catalyzes the reduction of ubiquinone-1 to ubiquinol by two successive reactions, coupled with the transport of Na(+) ions from the cytoplasm to the periplasm. NqrA to NqrE are probably involved in the second step, the conversion of ubisemiquinone to ubiquinol.</text>
</comment>
<comment type="catalytic activity">
    <reaction evidence="1">
        <text>a ubiquinone + n Na(+)(in) + NADH + H(+) = a ubiquinol + n Na(+)(out) + NAD(+)</text>
        <dbReference type="Rhea" id="RHEA:47748"/>
        <dbReference type="Rhea" id="RHEA-COMP:9565"/>
        <dbReference type="Rhea" id="RHEA-COMP:9566"/>
        <dbReference type="ChEBI" id="CHEBI:15378"/>
        <dbReference type="ChEBI" id="CHEBI:16389"/>
        <dbReference type="ChEBI" id="CHEBI:17976"/>
        <dbReference type="ChEBI" id="CHEBI:29101"/>
        <dbReference type="ChEBI" id="CHEBI:57540"/>
        <dbReference type="ChEBI" id="CHEBI:57945"/>
        <dbReference type="EC" id="7.2.1.1"/>
    </reaction>
</comment>
<comment type="cofactor">
    <cofactor evidence="1">
        <name>FMN</name>
        <dbReference type="ChEBI" id="CHEBI:58210"/>
    </cofactor>
</comment>
<comment type="subunit">
    <text evidence="1">Composed of six subunits; NqrA, NqrB, NqrC, NqrD, NqrE and NqrF.</text>
</comment>
<comment type="subcellular location">
    <subcellularLocation>
        <location evidence="1">Cell inner membrane</location>
        <topology evidence="1">Single-pass membrane protein</topology>
    </subcellularLocation>
</comment>
<comment type="similarity">
    <text evidence="1">Belongs to the NqrC family.</text>
</comment>
<comment type="sequence caution" evidence="2">
    <conflict type="erroneous initiation">
        <sequence resource="EMBL-CDS" id="AAM84534"/>
    </conflict>
</comment>
<comment type="sequence caution" evidence="2">
    <conflict type="erroneous initiation">
        <sequence resource="EMBL-CDS" id="AAS60961"/>
    </conflict>
</comment>
<name>NQRC_YERPE</name>
<sequence length="266" mass="29067">MASDKPRNNDSIGKTLLVVVILCLVCSVVVAGAAVGLKAKQQEQRLLDKQRNILAVAGLLQPRMLAEEVQQAFATRIEPRLLDLQSGEFLKQDPATFDRSQALRDNQMSIALTPAQDIAGIRRRANVVEIYLVRGDGGQINKVILPIYGSGLWSMMYAFVAIDTDGKTVRGITYYDHGETPGLGGEIENPIWRNQWIGKRLFDDQGQPAIRIVKGRAPANDPHAVDGLSGATLTSNGVQNSFNFWLGENGFGPFLKKVREGALKNG</sequence>
<organism>
    <name type="scientific">Yersinia pestis</name>
    <dbReference type="NCBI Taxonomy" id="632"/>
    <lineage>
        <taxon>Bacteria</taxon>
        <taxon>Pseudomonadati</taxon>
        <taxon>Pseudomonadota</taxon>
        <taxon>Gammaproteobacteria</taxon>
        <taxon>Enterobacterales</taxon>
        <taxon>Yersiniaceae</taxon>
        <taxon>Yersinia</taxon>
    </lineage>
</organism>
<reference key="1">
    <citation type="journal article" date="2001" name="Nature">
        <title>Genome sequence of Yersinia pestis, the causative agent of plague.</title>
        <authorList>
            <person name="Parkhill J."/>
            <person name="Wren B.W."/>
            <person name="Thomson N.R."/>
            <person name="Titball R.W."/>
            <person name="Holden M.T.G."/>
            <person name="Prentice M.B."/>
            <person name="Sebaihia M."/>
            <person name="James K.D."/>
            <person name="Churcher C.M."/>
            <person name="Mungall K.L."/>
            <person name="Baker S."/>
            <person name="Basham D."/>
            <person name="Bentley S.D."/>
            <person name="Brooks K."/>
            <person name="Cerdeno-Tarraga A.-M."/>
            <person name="Chillingworth T."/>
            <person name="Cronin A."/>
            <person name="Davies R.M."/>
            <person name="Davis P."/>
            <person name="Dougan G."/>
            <person name="Feltwell T."/>
            <person name="Hamlin N."/>
            <person name="Holroyd S."/>
            <person name="Jagels K."/>
            <person name="Karlyshev A.V."/>
            <person name="Leather S."/>
            <person name="Moule S."/>
            <person name="Oyston P.C.F."/>
            <person name="Quail M.A."/>
            <person name="Rutherford K.M."/>
            <person name="Simmonds M."/>
            <person name="Skelton J."/>
            <person name="Stevens K."/>
            <person name="Whitehead S."/>
            <person name="Barrell B.G."/>
        </authorList>
    </citation>
    <scope>NUCLEOTIDE SEQUENCE [LARGE SCALE GENOMIC DNA]</scope>
    <source>
        <strain>CO-92 / Biovar Orientalis</strain>
    </source>
</reference>
<reference key="2">
    <citation type="journal article" date="2002" name="J. Bacteriol.">
        <title>Genome sequence of Yersinia pestis KIM.</title>
        <authorList>
            <person name="Deng W."/>
            <person name="Burland V."/>
            <person name="Plunkett G. III"/>
            <person name="Boutin A."/>
            <person name="Mayhew G.F."/>
            <person name="Liss P."/>
            <person name="Perna N.T."/>
            <person name="Rose D.J."/>
            <person name="Mau B."/>
            <person name="Zhou S."/>
            <person name="Schwartz D.C."/>
            <person name="Fetherston J.D."/>
            <person name="Lindler L.E."/>
            <person name="Brubaker R.R."/>
            <person name="Plano G.V."/>
            <person name="Straley S.C."/>
            <person name="McDonough K.A."/>
            <person name="Nilles M.L."/>
            <person name="Matson J.S."/>
            <person name="Blattner F.R."/>
            <person name="Perry R.D."/>
        </authorList>
    </citation>
    <scope>NUCLEOTIDE SEQUENCE [LARGE SCALE GENOMIC DNA]</scope>
    <source>
        <strain>KIM10+ / Biovar Mediaevalis</strain>
    </source>
</reference>
<reference key="3">
    <citation type="journal article" date="2004" name="DNA Res.">
        <title>Complete genome sequence of Yersinia pestis strain 91001, an isolate avirulent to humans.</title>
        <authorList>
            <person name="Song Y."/>
            <person name="Tong Z."/>
            <person name="Wang J."/>
            <person name="Wang L."/>
            <person name="Guo Z."/>
            <person name="Han Y."/>
            <person name="Zhang J."/>
            <person name="Pei D."/>
            <person name="Zhou D."/>
            <person name="Qin H."/>
            <person name="Pang X."/>
            <person name="Han Y."/>
            <person name="Zhai J."/>
            <person name="Li M."/>
            <person name="Cui B."/>
            <person name="Qi Z."/>
            <person name="Jin L."/>
            <person name="Dai R."/>
            <person name="Chen F."/>
            <person name="Li S."/>
            <person name="Ye C."/>
            <person name="Du Z."/>
            <person name="Lin W."/>
            <person name="Wang J."/>
            <person name="Yu J."/>
            <person name="Yang H."/>
            <person name="Wang J."/>
            <person name="Huang P."/>
            <person name="Yang R."/>
        </authorList>
    </citation>
    <scope>NUCLEOTIDE SEQUENCE [LARGE SCALE GENOMIC DNA]</scope>
    <source>
        <strain>91001 / Biovar Mediaevalis</strain>
    </source>
</reference>
<protein>
    <recommendedName>
        <fullName evidence="1">Na(+)-translocating NADH-quinone reductase subunit C</fullName>
        <shortName evidence="1">Na(+)-NQR subunit C</shortName>
        <shortName evidence="1">Na(+)-translocating NQR subunit C</shortName>
        <ecNumber evidence="1">7.2.1.1</ecNumber>
    </recommendedName>
    <alternativeName>
        <fullName evidence="1">NQR complex subunit C</fullName>
    </alternativeName>
    <alternativeName>
        <fullName evidence="1">NQR-1 subunit C</fullName>
    </alternativeName>
</protein>